<sequence>MGKYFGTSGIRGRVGEFLTPELALRAGRALGEYLGGGTVAVGRDTRVHCDALRAAVISGLTAQGCDVVDIGVVCTPTLGCYVATEGLDAGVMITASHNPPEYNGIKFWDSDGMAFSPEQEREIEQIMDGDLEYPNWDEYGEVVDDETALNVHVERILDEVSVDGDGLRIVVDCANGPSAFVTPVVLREMGCEVISLNAHPDGHFPGREPEPKPENLKDLMRTVRATDADLGIAHDGDADRVVFVTEEGKFAGYDEVLALVCRRILEEKGPGKVAVNVDASMVIDEVVREMGGEVVRTKVGDVHVAAAIREEGCVFGGEPNGTWIHPDVHMCPDGPLSAAWMVSLLIEEGRPLSELLAEIPSYPVVRETVECPDELKPEVMRLVETRLREAYDDIDTVDGVRVELDDGWVLVRPSGTEPLIRITVEAESEERARELRDEFVDIVRRCVEEVRE</sequence>
<name>GLMM_METKA</name>
<dbReference type="EC" id="5.4.2.10" evidence="1"/>
<dbReference type="EMBL" id="AE009439">
    <property type="protein sequence ID" value="AAM02106.1"/>
    <property type="molecule type" value="Genomic_DNA"/>
</dbReference>
<dbReference type="RefSeq" id="WP_011019261.1">
    <property type="nucleotide sequence ID" value="NC_003551.1"/>
</dbReference>
<dbReference type="SMR" id="Q8TWY8"/>
<dbReference type="FunCoup" id="Q8TWY8">
    <property type="interactions" value="84"/>
</dbReference>
<dbReference type="STRING" id="190192.MK0893"/>
<dbReference type="PaxDb" id="190192-MK0893"/>
<dbReference type="EnsemblBacteria" id="AAM02106">
    <property type="protein sequence ID" value="AAM02106"/>
    <property type="gene ID" value="MK0893"/>
</dbReference>
<dbReference type="GeneID" id="1476994"/>
<dbReference type="KEGG" id="mka:MK0893"/>
<dbReference type="PATRIC" id="fig|190192.8.peg.935"/>
<dbReference type="HOGENOM" id="CLU_016950_7_1_2"/>
<dbReference type="InParanoid" id="Q8TWY8"/>
<dbReference type="OrthoDB" id="10363at2157"/>
<dbReference type="Proteomes" id="UP000001826">
    <property type="component" value="Chromosome"/>
</dbReference>
<dbReference type="GO" id="GO:0000287">
    <property type="term" value="F:magnesium ion binding"/>
    <property type="evidence" value="ECO:0007669"/>
    <property type="project" value="UniProtKB-UniRule"/>
</dbReference>
<dbReference type="GO" id="GO:0008966">
    <property type="term" value="F:phosphoglucosamine mutase activity"/>
    <property type="evidence" value="ECO:0007669"/>
    <property type="project" value="UniProtKB-UniRule"/>
</dbReference>
<dbReference type="GO" id="GO:0005975">
    <property type="term" value="P:carbohydrate metabolic process"/>
    <property type="evidence" value="ECO:0007669"/>
    <property type="project" value="InterPro"/>
</dbReference>
<dbReference type="CDD" id="cd03087">
    <property type="entry name" value="PGM_like1"/>
    <property type="match status" value="1"/>
</dbReference>
<dbReference type="FunFam" id="3.40.120.10:FF:000001">
    <property type="entry name" value="Phosphoglucosamine mutase"/>
    <property type="match status" value="1"/>
</dbReference>
<dbReference type="FunFam" id="3.40.120.10:FF:000003">
    <property type="entry name" value="Phosphoglucosamine mutase"/>
    <property type="match status" value="1"/>
</dbReference>
<dbReference type="Gene3D" id="3.40.120.10">
    <property type="entry name" value="Alpha-D-Glucose-1,6-Bisphosphate, subunit A, domain 3"/>
    <property type="match status" value="3"/>
</dbReference>
<dbReference type="Gene3D" id="3.30.310.50">
    <property type="entry name" value="Alpha-D-phosphohexomutase, C-terminal domain"/>
    <property type="match status" value="1"/>
</dbReference>
<dbReference type="HAMAP" id="MF_01554_A">
    <property type="entry name" value="GlmM_A"/>
    <property type="match status" value="1"/>
</dbReference>
<dbReference type="InterPro" id="IPR005844">
    <property type="entry name" value="A-D-PHexomutase_a/b/a-I"/>
</dbReference>
<dbReference type="InterPro" id="IPR016055">
    <property type="entry name" value="A-D-PHexomutase_a/b/a-I/II/III"/>
</dbReference>
<dbReference type="InterPro" id="IPR005845">
    <property type="entry name" value="A-D-PHexomutase_a/b/a-II"/>
</dbReference>
<dbReference type="InterPro" id="IPR005846">
    <property type="entry name" value="A-D-PHexomutase_a/b/a-III"/>
</dbReference>
<dbReference type="InterPro" id="IPR005843">
    <property type="entry name" value="A-D-PHexomutase_C"/>
</dbReference>
<dbReference type="InterPro" id="IPR036900">
    <property type="entry name" value="A-D-PHexomutase_C_sf"/>
</dbReference>
<dbReference type="InterPro" id="IPR016066">
    <property type="entry name" value="A-D-PHexomutase_CS"/>
</dbReference>
<dbReference type="InterPro" id="IPR005841">
    <property type="entry name" value="Alpha-D-phosphohexomutase_SF"/>
</dbReference>
<dbReference type="InterPro" id="IPR023666">
    <property type="entry name" value="GlmM_arc"/>
</dbReference>
<dbReference type="InterPro" id="IPR024086">
    <property type="entry name" value="GlmM_arc-type"/>
</dbReference>
<dbReference type="NCBIfam" id="TIGR03990">
    <property type="entry name" value="Arch_GlmM"/>
    <property type="match status" value="1"/>
</dbReference>
<dbReference type="PANTHER" id="PTHR43771">
    <property type="entry name" value="PHOSPHOMANNOMUTASE"/>
    <property type="match status" value="1"/>
</dbReference>
<dbReference type="PANTHER" id="PTHR43771:SF1">
    <property type="entry name" value="PHOSPHOMANNOMUTASE"/>
    <property type="match status" value="1"/>
</dbReference>
<dbReference type="Pfam" id="PF02878">
    <property type="entry name" value="PGM_PMM_I"/>
    <property type="match status" value="1"/>
</dbReference>
<dbReference type="Pfam" id="PF02879">
    <property type="entry name" value="PGM_PMM_II"/>
    <property type="match status" value="1"/>
</dbReference>
<dbReference type="Pfam" id="PF02880">
    <property type="entry name" value="PGM_PMM_III"/>
    <property type="match status" value="1"/>
</dbReference>
<dbReference type="Pfam" id="PF00408">
    <property type="entry name" value="PGM_PMM_IV"/>
    <property type="match status" value="1"/>
</dbReference>
<dbReference type="PRINTS" id="PR00509">
    <property type="entry name" value="PGMPMM"/>
</dbReference>
<dbReference type="SUPFAM" id="SSF55957">
    <property type="entry name" value="Phosphoglucomutase, C-terminal domain"/>
    <property type="match status" value="1"/>
</dbReference>
<dbReference type="SUPFAM" id="SSF53738">
    <property type="entry name" value="Phosphoglucomutase, first 3 domains"/>
    <property type="match status" value="3"/>
</dbReference>
<dbReference type="PROSITE" id="PS00710">
    <property type="entry name" value="PGM_PMM"/>
    <property type="match status" value="1"/>
</dbReference>
<feature type="chain" id="PRO_0000337817" description="Probable phosphoglucosamine mutase">
    <location>
        <begin position="1"/>
        <end position="452"/>
    </location>
</feature>
<feature type="active site" description="Phosphoserine intermediate" evidence="1">
    <location>
        <position position="96"/>
    </location>
</feature>
<feature type="binding site" description="via phosphate group" evidence="1">
    <location>
        <position position="96"/>
    </location>
    <ligand>
        <name>Mg(2+)</name>
        <dbReference type="ChEBI" id="CHEBI:18420"/>
    </ligand>
</feature>
<feature type="binding site" evidence="1">
    <location>
        <position position="235"/>
    </location>
    <ligand>
        <name>Mg(2+)</name>
        <dbReference type="ChEBI" id="CHEBI:18420"/>
    </ligand>
</feature>
<feature type="binding site" evidence="1">
    <location>
        <position position="237"/>
    </location>
    <ligand>
        <name>Mg(2+)</name>
        <dbReference type="ChEBI" id="CHEBI:18420"/>
    </ligand>
</feature>
<feature type="binding site" evidence="1">
    <location>
        <position position="239"/>
    </location>
    <ligand>
        <name>Mg(2+)</name>
        <dbReference type="ChEBI" id="CHEBI:18420"/>
    </ligand>
</feature>
<feature type="modified residue" description="Phosphoserine" evidence="1">
    <location>
        <position position="96"/>
    </location>
</feature>
<keyword id="KW-0413">Isomerase</keyword>
<keyword id="KW-0460">Magnesium</keyword>
<keyword id="KW-0479">Metal-binding</keyword>
<keyword id="KW-0597">Phosphoprotein</keyword>
<keyword id="KW-1185">Reference proteome</keyword>
<proteinExistence type="inferred from homology"/>
<comment type="function">
    <text evidence="1">Catalyzes the conversion of glucosamine-6-phosphate to glucosamine-1-phosphate.</text>
</comment>
<comment type="catalytic activity">
    <reaction evidence="1">
        <text>alpha-D-glucosamine 1-phosphate = D-glucosamine 6-phosphate</text>
        <dbReference type="Rhea" id="RHEA:23424"/>
        <dbReference type="ChEBI" id="CHEBI:58516"/>
        <dbReference type="ChEBI" id="CHEBI:58725"/>
        <dbReference type="EC" id="5.4.2.10"/>
    </reaction>
</comment>
<comment type="cofactor">
    <cofactor evidence="1">
        <name>Mg(2+)</name>
        <dbReference type="ChEBI" id="CHEBI:18420"/>
    </cofactor>
    <text evidence="1">Binds 1 Mg(2+) ion per subunit.</text>
</comment>
<comment type="PTM">
    <text evidence="1">Activated by phosphorylation.</text>
</comment>
<comment type="similarity">
    <text evidence="1">Belongs to the phosphohexose mutase family.</text>
</comment>
<accession>Q8TWY8</accession>
<organism>
    <name type="scientific">Methanopyrus kandleri (strain AV19 / DSM 6324 / JCM 9639 / NBRC 100938)</name>
    <dbReference type="NCBI Taxonomy" id="190192"/>
    <lineage>
        <taxon>Archaea</taxon>
        <taxon>Methanobacteriati</taxon>
        <taxon>Methanobacteriota</taxon>
        <taxon>Methanomada group</taxon>
        <taxon>Methanopyri</taxon>
        <taxon>Methanopyrales</taxon>
        <taxon>Methanopyraceae</taxon>
        <taxon>Methanopyrus</taxon>
    </lineage>
</organism>
<evidence type="ECO:0000255" key="1">
    <source>
        <dbReference type="HAMAP-Rule" id="MF_01554"/>
    </source>
</evidence>
<gene>
    <name evidence="1" type="primary">glmM</name>
    <name type="ordered locus">MK0893</name>
</gene>
<reference key="1">
    <citation type="journal article" date="2002" name="Proc. Natl. Acad. Sci. U.S.A.">
        <title>The complete genome of hyperthermophile Methanopyrus kandleri AV19 and monophyly of archaeal methanogens.</title>
        <authorList>
            <person name="Slesarev A.I."/>
            <person name="Mezhevaya K.V."/>
            <person name="Makarova K.S."/>
            <person name="Polushin N.N."/>
            <person name="Shcherbinina O.V."/>
            <person name="Shakhova V.V."/>
            <person name="Belova G.I."/>
            <person name="Aravind L."/>
            <person name="Natale D.A."/>
            <person name="Rogozin I.B."/>
            <person name="Tatusov R.L."/>
            <person name="Wolf Y.I."/>
            <person name="Stetter K.O."/>
            <person name="Malykh A.G."/>
            <person name="Koonin E.V."/>
            <person name="Kozyavkin S.A."/>
        </authorList>
    </citation>
    <scope>NUCLEOTIDE SEQUENCE [LARGE SCALE GENOMIC DNA]</scope>
    <source>
        <strain>AV19 / DSM 6324 / JCM 9639 / NBRC 100938</strain>
    </source>
</reference>
<protein>
    <recommendedName>
        <fullName evidence="1">Probable phosphoglucosamine mutase</fullName>
        <ecNumber evidence="1">5.4.2.10</ecNumber>
    </recommendedName>
</protein>